<reference key="1">
    <citation type="journal article" date="2004" name="Biol. Reprod.">
        <title>Follicle-restricted compartmentalization of transforming growth factor-beta superfamily ligands in the feline ovary.</title>
        <authorList>
            <person name="Bristol S.K."/>
            <person name="Woodruff T.K."/>
        </authorList>
    </citation>
    <scope>NUCLEOTIDE SEQUENCE [MRNA]</scope>
</reference>
<feature type="signal peptide" evidence="3">
    <location>
        <begin position="1"/>
        <end position="20"/>
    </location>
</feature>
<feature type="propeptide" id="PRO_0000226732" evidence="1">
    <location>
        <begin position="21"/>
        <end position="308"/>
    </location>
</feature>
<feature type="chain" id="PRO_0000226733" description="Inhibin beta A chain">
    <location>
        <begin position="309"/>
        <end position="424"/>
    </location>
</feature>
<feature type="region of interest" description="Disordered" evidence="4">
    <location>
        <begin position="257"/>
        <end position="288"/>
    </location>
</feature>
<feature type="compositionally biased region" description="Basic and acidic residues" evidence="4">
    <location>
        <begin position="261"/>
        <end position="273"/>
    </location>
</feature>
<feature type="glycosylation site" description="N-linked (GlcNAc...) asparagine" evidence="3">
    <location>
        <position position="165"/>
    </location>
</feature>
<feature type="disulfide bond" evidence="1">
    <location>
        <begin position="312"/>
        <end position="320"/>
    </location>
</feature>
<feature type="disulfide bond" evidence="1">
    <location>
        <begin position="319"/>
        <end position="389"/>
    </location>
</feature>
<feature type="disulfide bond" evidence="1">
    <location>
        <begin position="348"/>
        <end position="421"/>
    </location>
</feature>
<feature type="disulfide bond" evidence="1">
    <location>
        <begin position="352"/>
        <end position="423"/>
    </location>
</feature>
<feature type="disulfide bond" description="Interchain" evidence="1">
    <location>
        <position position="388"/>
    </location>
</feature>
<comment type="function">
    <text evidence="2">Inhibins/activins are involved in regulating a number of diverse functions such as hypothalamic and pituitary hormone secretion, gonadal hormone secretion, germ cell development and maturation, erythroid differentiation, insulin secretion, nerve cell survival, embryonic axial development or bone growth, depending on their subunit composition.</text>
</comment>
<comment type="function">
    <text evidence="2">Activin A is a homodimer of INHBA that plays a role in several essential biological processes including embryonic development, stem cell maintenance and differentiation, haematopoiesis, cell proliferation and tissue fibrosis. Signals through type I (such as ACVR1B or ACVR1C) and type II receptors (such as ACVR2A, ACVR2B or BMPR2) which, upon ligand binding, phosphorylate SMAD2 and SMAD3 intracellular signaling mediators that form a complex with SMAD4, translocate to the nucleus and modulate gene expression. Can also activate alternative non-canonical intracellular signaling pathways including the p38 MAPK, extracellular signal-regulated kinases 1/2 (ERK1/2) and c-Jun N-terminal kinases (JNKs) to modulate cell migration and differentiation. Alternatively, promotes osteoblastic differentiation via ACVRL1-SMAD1/5/9 pathway. In addition, can engage the type I receptor ACVR1 to form an ACVR1-activin A-type II receptor non-signaling complex (NSC) that renders receptors unavailable for engagement with BMPs, hence resulting in an apparent inhibition of ACVR1-mediated BMP signaling.</text>
</comment>
<comment type="function">
    <text evidence="2">Inhibin A is a dimer of alpha/INHA and beta-A/INHBA that functions as a feedback regulator in the hypothalamic-pituitary-gonadal (HPG) axis. Inhibits the secretion of FSH from the anterior pituitary gland by acting on pituitary gonadotrope cells. Antagonizes activin A by binding to the proteoglycan, betaglycan, and forming a stable complex with and, thereby, sequestering type II activin receptors while excluding type I receptor.</text>
</comment>
<comment type="subunit">
    <text evidence="2">Dimeric, linked by one or more disulfide bonds. Inhibin A is a dimer of alpha/INHA and beta-A/INHBA. Activin A is a homodimer of beta-A/INHBA. Activin AB is a dimer of beta-A/INHBA and beta-B/INHBB. Interacts with FST and FSTL3; these interactions prevent activin A interaction to its type II receptor. Activin A interacts with ACVR2A. Activin A interacts with BMPR2. Inhibin A interacts with ACVR1; this interaction creates a non-signaling complex (NSC) that inhibits ACVR1-mediated BMP signaling. Inhibin A interacts with ACVR2A.</text>
</comment>
<comment type="subcellular location">
    <subcellularLocation>
        <location evidence="2">Secreted</location>
    </subcellularLocation>
</comment>
<comment type="similarity">
    <text evidence="5">Belongs to the TGF-beta family.</text>
</comment>
<dbReference type="EMBL" id="AY258628">
    <property type="protein sequence ID" value="AAP83318.1"/>
    <property type="molecule type" value="mRNA"/>
</dbReference>
<dbReference type="RefSeq" id="NP_001009856.1">
    <property type="nucleotide sequence ID" value="NM_001009856.1"/>
</dbReference>
<dbReference type="RefSeq" id="XP_044897354.1">
    <property type="nucleotide sequence ID" value="XM_045041419.1"/>
</dbReference>
<dbReference type="SMR" id="Q6X2S4"/>
<dbReference type="STRING" id="9685.ENSFCAP00000045665"/>
<dbReference type="GlyCosmos" id="Q6X2S4">
    <property type="glycosylation" value="1 site, No reported glycans"/>
</dbReference>
<dbReference type="Ensembl" id="ENSFCAT00000062415.2">
    <property type="protein sequence ID" value="ENSFCAP00000045665.1"/>
    <property type="gene ID" value="ENSFCAG00000010866.5"/>
</dbReference>
<dbReference type="GeneID" id="493853"/>
<dbReference type="KEGG" id="fca:493853"/>
<dbReference type="CTD" id="3624"/>
<dbReference type="VGNC" id="VGNC:80600">
    <property type="gene designation" value="INHBA"/>
</dbReference>
<dbReference type="GeneTree" id="ENSGT00940000157116"/>
<dbReference type="InParanoid" id="Q6X2S4"/>
<dbReference type="OMA" id="CCKKHFY"/>
<dbReference type="OrthoDB" id="6516235at2759"/>
<dbReference type="TreeFam" id="TF351791"/>
<dbReference type="Proteomes" id="UP000011712">
    <property type="component" value="Chromosome A2"/>
</dbReference>
<dbReference type="Bgee" id="ENSFCAG00000010866">
    <property type="expression patterns" value="Expressed in liver and 11 other cell types or tissues"/>
</dbReference>
<dbReference type="GO" id="GO:0043509">
    <property type="term" value="C:activin A complex"/>
    <property type="evidence" value="ECO:0000250"/>
    <property type="project" value="UniProtKB"/>
</dbReference>
<dbReference type="GO" id="GO:0150005">
    <property type="term" value="C:enzyme activator complex"/>
    <property type="evidence" value="ECO:0007669"/>
    <property type="project" value="Ensembl"/>
</dbReference>
<dbReference type="GO" id="GO:0005576">
    <property type="term" value="C:extracellular region"/>
    <property type="evidence" value="ECO:0000250"/>
    <property type="project" value="UniProtKB"/>
</dbReference>
<dbReference type="GO" id="GO:0005615">
    <property type="term" value="C:extracellular space"/>
    <property type="evidence" value="ECO:0000318"/>
    <property type="project" value="GO_Central"/>
</dbReference>
<dbReference type="GO" id="GO:0043512">
    <property type="term" value="C:inhibin A complex"/>
    <property type="evidence" value="ECO:0000250"/>
    <property type="project" value="UniProtKB"/>
</dbReference>
<dbReference type="GO" id="GO:0048471">
    <property type="term" value="C:perinuclear region of cytoplasm"/>
    <property type="evidence" value="ECO:0007669"/>
    <property type="project" value="Ensembl"/>
</dbReference>
<dbReference type="GO" id="GO:0005125">
    <property type="term" value="F:cytokine activity"/>
    <property type="evidence" value="ECO:0000250"/>
    <property type="project" value="UniProtKB"/>
</dbReference>
<dbReference type="GO" id="GO:0008083">
    <property type="term" value="F:growth factor activity"/>
    <property type="evidence" value="ECO:0007669"/>
    <property type="project" value="UniProtKB-KW"/>
</dbReference>
<dbReference type="GO" id="GO:0005179">
    <property type="term" value="F:hormone activity"/>
    <property type="evidence" value="ECO:0007669"/>
    <property type="project" value="UniProtKB-KW"/>
</dbReference>
<dbReference type="GO" id="GO:0042802">
    <property type="term" value="F:identical protein binding"/>
    <property type="evidence" value="ECO:0007669"/>
    <property type="project" value="Ensembl"/>
</dbReference>
<dbReference type="GO" id="GO:0017046">
    <property type="term" value="F:peptide hormone binding"/>
    <property type="evidence" value="ECO:0007669"/>
    <property type="project" value="Ensembl"/>
</dbReference>
<dbReference type="GO" id="GO:0070699">
    <property type="term" value="F:type II activin receptor binding"/>
    <property type="evidence" value="ECO:0007669"/>
    <property type="project" value="Ensembl"/>
</dbReference>
<dbReference type="GO" id="GO:0032924">
    <property type="term" value="P:activin receptor signaling pathway"/>
    <property type="evidence" value="ECO:0000250"/>
    <property type="project" value="UniProtKB"/>
</dbReference>
<dbReference type="GO" id="GO:0008209">
    <property type="term" value="P:androgen metabolic process"/>
    <property type="evidence" value="ECO:0007669"/>
    <property type="project" value="Ensembl"/>
</dbReference>
<dbReference type="GO" id="GO:1903449">
    <property type="term" value="P:androst-4-ene-3,17-dione biosynthetic process"/>
    <property type="evidence" value="ECO:0007669"/>
    <property type="project" value="Ensembl"/>
</dbReference>
<dbReference type="GO" id="GO:0035987">
    <property type="term" value="P:endodermal cell differentiation"/>
    <property type="evidence" value="ECO:0007669"/>
    <property type="project" value="Ensembl"/>
</dbReference>
<dbReference type="GO" id="GO:0097191">
    <property type="term" value="P:extrinsic apoptotic signaling pathway"/>
    <property type="evidence" value="ECO:0007669"/>
    <property type="project" value="Ensembl"/>
</dbReference>
<dbReference type="GO" id="GO:0061029">
    <property type="term" value="P:eyelid development in camera-type eye"/>
    <property type="evidence" value="ECO:0000250"/>
    <property type="project" value="UniProtKB"/>
</dbReference>
<dbReference type="GO" id="GO:0001942">
    <property type="term" value="P:hair follicle development"/>
    <property type="evidence" value="ECO:0000250"/>
    <property type="project" value="UniProtKB"/>
</dbReference>
<dbReference type="GO" id="GO:0002244">
    <property type="term" value="P:hematopoietic progenitor cell differentiation"/>
    <property type="evidence" value="ECO:0000250"/>
    <property type="project" value="UniProtKB"/>
</dbReference>
<dbReference type="GO" id="GO:0042541">
    <property type="term" value="P:hemoglobin biosynthetic process"/>
    <property type="evidence" value="ECO:0000250"/>
    <property type="project" value="UniProtKB"/>
</dbReference>
<dbReference type="GO" id="GO:0008584">
    <property type="term" value="P:male gonad development"/>
    <property type="evidence" value="ECO:0000250"/>
    <property type="project" value="UniProtKB"/>
</dbReference>
<dbReference type="GO" id="GO:0048333">
    <property type="term" value="P:mesodermal cell differentiation"/>
    <property type="evidence" value="ECO:0007669"/>
    <property type="project" value="Ensembl"/>
</dbReference>
<dbReference type="GO" id="GO:0030308">
    <property type="term" value="P:negative regulation of cell growth"/>
    <property type="evidence" value="ECO:0000250"/>
    <property type="project" value="UniProtKB"/>
</dbReference>
<dbReference type="GO" id="GO:0008285">
    <property type="term" value="P:negative regulation of cell population proliferation"/>
    <property type="evidence" value="ECO:0000250"/>
    <property type="project" value="UniProtKB"/>
</dbReference>
<dbReference type="GO" id="GO:2000134">
    <property type="term" value="P:negative regulation of G1/S transition of mitotic cell cycle"/>
    <property type="evidence" value="ECO:0000250"/>
    <property type="project" value="UniProtKB"/>
</dbReference>
<dbReference type="GO" id="GO:0051799">
    <property type="term" value="P:negative regulation of hair follicle development"/>
    <property type="evidence" value="ECO:0007669"/>
    <property type="project" value="Ensembl"/>
</dbReference>
<dbReference type="GO" id="GO:0042476">
    <property type="term" value="P:odontogenesis"/>
    <property type="evidence" value="ECO:0000250"/>
    <property type="project" value="UniProtKB"/>
</dbReference>
<dbReference type="GO" id="GO:0001541">
    <property type="term" value="P:ovarian follicle development"/>
    <property type="evidence" value="ECO:0000250"/>
    <property type="project" value="UniProtKB"/>
</dbReference>
<dbReference type="GO" id="GO:0045893">
    <property type="term" value="P:positive regulation of DNA-templated transcription"/>
    <property type="evidence" value="ECO:0000250"/>
    <property type="project" value="UniProtKB"/>
</dbReference>
<dbReference type="GO" id="GO:0045648">
    <property type="term" value="P:positive regulation of erythrocyte differentiation"/>
    <property type="evidence" value="ECO:0000250"/>
    <property type="project" value="UniProtKB"/>
</dbReference>
<dbReference type="GO" id="GO:2001241">
    <property type="term" value="P:positive regulation of extrinsic apoptotic signaling pathway in absence of ligand"/>
    <property type="evidence" value="ECO:0000250"/>
    <property type="project" value="UniProtKB"/>
</dbReference>
<dbReference type="GO" id="GO:0010628">
    <property type="term" value="P:positive regulation of gene expression"/>
    <property type="evidence" value="ECO:0007669"/>
    <property type="project" value="Ensembl"/>
</dbReference>
<dbReference type="GO" id="GO:0060279">
    <property type="term" value="P:positive regulation of ovulation"/>
    <property type="evidence" value="ECO:0000250"/>
    <property type="project" value="UniProtKB"/>
</dbReference>
<dbReference type="GO" id="GO:0051247">
    <property type="term" value="P:positive regulation of protein metabolic process"/>
    <property type="evidence" value="ECO:0007669"/>
    <property type="project" value="Ensembl"/>
</dbReference>
<dbReference type="GO" id="GO:0060391">
    <property type="term" value="P:positive regulation of SMAD protein signal transduction"/>
    <property type="evidence" value="ECO:0007669"/>
    <property type="project" value="Ensembl"/>
</dbReference>
<dbReference type="GO" id="GO:0045944">
    <property type="term" value="P:positive regulation of transcription by RNA polymerase II"/>
    <property type="evidence" value="ECO:0000250"/>
    <property type="project" value="UniProtKB"/>
</dbReference>
<dbReference type="GO" id="GO:0042701">
    <property type="term" value="P:progesterone secretion"/>
    <property type="evidence" value="ECO:0000250"/>
    <property type="project" value="UniProtKB"/>
</dbReference>
<dbReference type="GO" id="GO:0046880">
    <property type="term" value="P:regulation of follicle-stimulating hormone secretion"/>
    <property type="evidence" value="ECO:0000250"/>
    <property type="project" value="UniProtKB"/>
</dbReference>
<dbReference type="GO" id="GO:0006357">
    <property type="term" value="P:regulation of transcription by RNA polymerase II"/>
    <property type="evidence" value="ECO:0000250"/>
    <property type="project" value="UniProtKB"/>
</dbReference>
<dbReference type="GO" id="GO:0060021">
    <property type="term" value="P:roof of mouth development"/>
    <property type="evidence" value="ECO:0000250"/>
    <property type="project" value="UniProtKB"/>
</dbReference>
<dbReference type="GO" id="GO:0060008">
    <property type="term" value="P:Sertoli cell differentiation"/>
    <property type="evidence" value="ECO:0007669"/>
    <property type="project" value="Ensembl"/>
</dbReference>
<dbReference type="GO" id="GO:0021773">
    <property type="term" value="P:striatal medium spiny neuron differentiation"/>
    <property type="evidence" value="ECO:0007669"/>
    <property type="project" value="Ensembl"/>
</dbReference>
<dbReference type="GO" id="GO:0061370">
    <property type="term" value="P:testosterone biosynthetic process"/>
    <property type="evidence" value="ECO:0007669"/>
    <property type="project" value="Ensembl"/>
</dbReference>
<dbReference type="GO" id="GO:0006366">
    <property type="term" value="P:transcription by RNA polymerase II"/>
    <property type="evidence" value="ECO:0007669"/>
    <property type="project" value="Ensembl"/>
</dbReference>
<dbReference type="CDD" id="cd19404">
    <property type="entry name" value="TGF_beta_INHBA"/>
    <property type="match status" value="1"/>
</dbReference>
<dbReference type="FunFam" id="2.10.90.10:FF:000005">
    <property type="entry name" value="Inhibin beta A chain"/>
    <property type="match status" value="1"/>
</dbReference>
<dbReference type="FunFam" id="2.60.120.970:FF:000007">
    <property type="entry name" value="Inhibin beta A chain"/>
    <property type="match status" value="1"/>
</dbReference>
<dbReference type="Gene3D" id="2.60.120.970">
    <property type="match status" value="1"/>
</dbReference>
<dbReference type="Gene3D" id="2.10.90.10">
    <property type="entry name" value="Cystine-knot cytokines"/>
    <property type="match status" value="1"/>
</dbReference>
<dbReference type="InterPro" id="IPR029034">
    <property type="entry name" value="Cystine-knot_cytokine"/>
</dbReference>
<dbReference type="InterPro" id="IPR000491">
    <property type="entry name" value="Inhibin_betaA"/>
</dbReference>
<dbReference type="InterPro" id="IPR001839">
    <property type="entry name" value="TGF-b_C"/>
</dbReference>
<dbReference type="InterPro" id="IPR001111">
    <property type="entry name" value="TGF-b_propeptide"/>
</dbReference>
<dbReference type="InterPro" id="IPR015615">
    <property type="entry name" value="TGF-beta-rel"/>
</dbReference>
<dbReference type="InterPro" id="IPR017948">
    <property type="entry name" value="TGFb_CS"/>
</dbReference>
<dbReference type="PANTHER" id="PTHR11848:SF133">
    <property type="entry name" value="INHIBIN BETA A CHAIN"/>
    <property type="match status" value="1"/>
</dbReference>
<dbReference type="PANTHER" id="PTHR11848">
    <property type="entry name" value="TGF-BETA FAMILY"/>
    <property type="match status" value="1"/>
</dbReference>
<dbReference type="Pfam" id="PF00019">
    <property type="entry name" value="TGF_beta"/>
    <property type="match status" value="1"/>
</dbReference>
<dbReference type="Pfam" id="PF00688">
    <property type="entry name" value="TGFb_propeptide"/>
    <property type="match status" value="1"/>
</dbReference>
<dbReference type="PRINTS" id="PR00670">
    <property type="entry name" value="INHIBINBA"/>
</dbReference>
<dbReference type="SMART" id="SM00204">
    <property type="entry name" value="TGFB"/>
    <property type="match status" value="1"/>
</dbReference>
<dbReference type="SUPFAM" id="SSF57501">
    <property type="entry name" value="Cystine-knot cytokines"/>
    <property type="match status" value="1"/>
</dbReference>
<dbReference type="PROSITE" id="PS00250">
    <property type="entry name" value="TGF_BETA_1"/>
    <property type="match status" value="1"/>
</dbReference>
<dbReference type="PROSITE" id="PS51362">
    <property type="entry name" value="TGF_BETA_2"/>
    <property type="match status" value="1"/>
</dbReference>
<sequence length="424" mass="47202">MPLLWLRGFLLASCWIIVRSSPTPGSEGPGAAPDCPSCALATLPKDVPNSQPEMVEAVKKHILNMLHLKKRPEVTQPVPKAALLNAIRKLHVGKVGENGYVEIEDDIGRRAEMNELMEQTSEIITFAESGTARKTLHFEISKEGSDLSVVERAEVWLFLKVPKANRTRTKVTIQLLQKQPQGGVDAGEEAEEMGLMEERNEVLISEKVVDARKSTWHIFPVSSSIQRLLDQGKSSLDVRIACEQCHETGASLVLLGKKKKKEEEGEGKKKDGGDGGAGADEDKEQSHRPFLMLQARQSEDHPHRRRRRGLECDGKVNICCKKQFFVSFKDIGWNDWIIAPSGYHANYCEGECPSHIAGTSGSSLSFHSTVINHYRMRGHSPFANLKSCCVPTKLRPMSMLYYDDGQNIIKKDIQNMIVEECGCS</sequence>
<organism>
    <name type="scientific">Felis catus</name>
    <name type="common">Cat</name>
    <name type="synonym">Felis silvestris catus</name>
    <dbReference type="NCBI Taxonomy" id="9685"/>
    <lineage>
        <taxon>Eukaryota</taxon>
        <taxon>Metazoa</taxon>
        <taxon>Chordata</taxon>
        <taxon>Craniata</taxon>
        <taxon>Vertebrata</taxon>
        <taxon>Euteleostomi</taxon>
        <taxon>Mammalia</taxon>
        <taxon>Eutheria</taxon>
        <taxon>Laurasiatheria</taxon>
        <taxon>Carnivora</taxon>
        <taxon>Feliformia</taxon>
        <taxon>Felidae</taxon>
        <taxon>Felinae</taxon>
        <taxon>Felis</taxon>
    </lineage>
</organism>
<protein>
    <recommendedName>
        <fullName>Inhibin beta A chain</fullName>
    </recommendedName>
    <alternativeName>
        <fullName>Activin beta-A chain</fullName>
    </alternativeName>
</protein>
<keyword id="KW-0165">Cleavage on pair of basic residues</keyword>
<keyword id="KW-1015">Disulfide bond</keyword>
<keyword id="KW-0325">Glycoprotein</keyword>
<keyword id="KW-0339">Growth factor</keyword>
<keyword id="KW-0372">Hormone</keyword>
<keyword id="KW-1185">Reference proteome</keyword>
<keyword id="KW-0964">Secreted</keyword>
<keyword id="KW-0732">Signal</keyword>
<evidence type="ECO:0000250" key="1"/>
<evidence type="ECO:0000250" key="2">
    <source>
        <dbReference type="UniProtKB" id="P08476"/>
    </source>
</evidence>
<evidence type="ECO:0000255" key="3"/>
<evidence type="ECO:0000256" key="4">
    <source>
        <dbReference type="SAM" id="MobiDB-lite"/>
    </source>
</evidence>
<evidence type="ECO:0000305" key="5"/>
<proteinExistence type="evidence at transcript level"/>
<gene>
    <name type="primary">INHBA</name>
</gene>
<name>INHBA_FELCA</name>
<accession>Q6X2S4</accession>